<name>DXR_BORPD</name>
<organism>
    <name type="scientific">Bordetella petrii (strain ATCC BAA-461 / DSM 12804 / CCUG 43448)</name>
    <dbReference type="NCBI Taxonomy" id="340100"/>
    <lineage>
        <taxon>Bacteria</taxon>
        <taxon>Pseudomonadati</taxon>
        <taxon>Pseudomonadota</taxon>
        <taxon>Betaproteobacteria</taxon>
        <taxon>Burkholderiales</taxon>
        <taxon>Alcaligenaceae</taxon>
        <taxon>Bordetella</taxon>
    </lineage>
</organism>
<comment type="function">
    <text evidence="1">Catalyzes the NADPH-dependent rearrangement and reduction of 1-deoxy-D-xylulose-5-phosphate (DXP) to 2-C-methyl-D-erythritol 4-phosphate (MEP).</text>
</comment>
<comment type="catalytic activity">
    <reaction evidence="1">
        <text>2-C-methyl-D-erythritol 4-phosphate + NADP(+) = 1-deoxy-D-xylulose 5-phosphate + NADPH + H(+)</text>
        <dbReference type="Rhea" id="RHEA:13717"/>
        <dbReference type="ChEBI" id="CHEBI:15378"/>
        <dbReference type="ChEBI" id="CHEBI:57783"/>
        <dbReference type="ChEBI" id="CHEBI:57792"/>
        <dbReference type="ChEBI" id="CHEBI:58262"/>
        <dbReference type="ChEBI" id="CHEBI:58349"/>
        <dbReference type="EC" id="1.1.1.267"/>
    </reaction>
    <physiologicalReaction direction="right-to-left" evidence="1">
        <dbReference type="Rhea" id="RHEA:13719"/>
    </physiologicalReaction>
</comment>
<comment type="cofactor">
    <cofactor evidence="1">
        <name>Mg(2+)</name>
        <dbReference type="ChEBI" id="CHEBI:18420"/>
    </cofactor>
    <cofactor evidence="1">
        <name>Mn(2+)</name>
        <dbReference type="ChEBI" id="CHEBI:29035"/>
    </cofactor>
</comment>
<comment type="pathway">
    <text evidence="1">Isoprenoid biosynthesis; isopentenyl diphosphate biosynthesis via DXP pathway; isopentenyl diphosphate from 1-deoxy-D-xylulose 5-phosphate: step 1/6.</text>
</comment>
<comment type="similarity">
    <text evidence="1">Belongs to the DXR family.</text>
</comment>
<proteinExistence type="inferred from homology"/>
<dbReference type="EC" id="1.1.1.267" evidence="1"/>
<dbReference type="EMBL" id="AM902716">
    <property type="protein sequence ID" value="CAP42871.1"/>
    <property type="molecule type" value="Genomic_DNA"/>
</dbReference>
<dbReference type="SMR" id="A9INU2"/>
<dbReference type="STRING" id="94624.Bpet2529"/>
<dbReference type="KEGG" id="bpt:Bpet2529"/>
<dbReference type="eggNOG" id="COG0743">
    <property type="taxonomic scope" value="Bacteria"/>
</dbReference>
<dbReference type="UniPathway" id="UPA00056">
    <property type="reaction ID" value="UER00092"/>
</dbReference>
<dbReference type="Proteomes" id="UP000001225">
    <property type="component" value="Chromosome"/>
</dbReference>
<dbReference type="GO" id="GO:0030604">
    <property type="term" value="F:1-deoxy-D-xylulose-5-phosphate reductoisomerase activity"/>
    <property type="evidence" value="ECO:0007669"/>
    <property type="project" value="UniProtKB-UniRule"/>
</dbReference>
<dbReference type="GO" id="GO:0030145">
    <property type="term" value="F:manganese ion binding"/>
    <property type="evidence" value="ECO:0007669"/>
    <property type="project" value="TreeGrafter"/>
</dbReference>
<dbReference type="GO" id="GO:0070402">
    <property type="term" value="F:NADPH binding"/>
    <property type="evidence" value="ECO:0007669"/>
    <property type="project" value="InterPro"/>
</dbReference>
<dbReference type="GO" id="GO:0051484">
    <property type="term" value="P:isopentenyl diphosphate biosynthetic process, methylerythritol 4-phosphate pathway involved in terpenoid biosynthetic process"/>
    <property type="evidence" value="ECO:0007669"/>
    <property type="project" value="TreeGrafter"/>
</dbReference>
<dbReference type="FunFam" id="3.40.50.720:FF:000045">
    <property type="entry name" value="1-deoxy-D-xylulose 5-phosphate reductoisomerase"/>
    <property type="match status" value="1"/>
</dbReference>
<dbReference type="Gene3D" id="1.10.1740.10">
    <property type="match status" value="1"/>
</dbReference>
<dbReference type="Gene3D" id="3.40.50.720">
    <property type="entry name" value="NAD(P)-binding Rossmann-like Domain"/>
    <property type="match status" value="1"/>
</dbReference>
<dbReference type="HAMAP" id="MF_00183">
    <property type="entry name" value="DXP_reductoisom"/>
    <property type="match status" value="1"/>
</dbReference>
<dbReference type="InterPro" id="IPR003821">
    <property type="entry name" value="DXP_reductoisomerase"/>
</dbReference>
<dbReference type="InterPro" id="IPR013644">
    <property type="entry name" value="DXP_reductoisomerase_C"/>
</dbReference>
<dbReference type="InterPro" id="IPR013512">
    <property type="entry name" value="DXP_reductoisomerase_N"/>
</dbReference>
<dbReference type="InterPro" id="IPR026877">
    <property type="entry name" value="DXPR_C"/>
</dbReference>
<dbReference type="InterPro" id="IPR036169">
    <property type="entry name" value="DXPR_C_sf"/>
</dbReference>
<dbReference type="InterPro" id="IPR036291">
    <property type="entry name" value="NAD(P)-bd_dom_sf"/>
</dbReference>
<dbReference type="NCBIfam" id="TIGR00243">
    <property type="entry name" value="Dxr"/>
    <property type="match status" value="1"/>
</dbReference>
<dbReference type="NCBIfam" id="NF009114">
    <property type="entry name" value="PRK12464.1"/>
    <property type="match status" value="1"/>
</dbReference>
<dbReference type="PANTHER" id="PTHR30525">
    <property type="entry name" value="1-DEOXY-D-XYLULOSE 5-PHOSPHATE REDUCTOISOMERASE"/>
    <property type="match status" value="1"/>
</dbReference>
<dbReference type="PANTHER" id="PTHR30525:SF0">
    <property type="entry name" value="1-DEOXY-D-XYLULOSE 5-PHOSPHATE REDUCTOISOMERASE, CHLOROPLASTIC"/>
    <property type="match status" value="1"/>
</dbReference>
<dbReference type="Pfam" id="PF08436">
    <property type="entry name" value="DXP_redisom_C"/>
    <property type="match status" value="1"/>
</dbReference>
<dbReference type="Pfam" id="PF02670">
    <property type="entry name" value="DXP_reductoisom"/>
    <property type="match status" value="1"/>
</dbReference>
<dbReference type="Pfam" id="PF13288">
    <property type="entry name" value="DXPR_C"/>
    <property type="match status" value="1"/>
</dbReference>
<dbReference type="PIRSF" id="PIRSF006205">
    <property type="entry name" value="Dxp_reductismrs"/>
    <property type="match status" value="1"/>
</dbReference>
<dbReference type="SUPFAM" id="SSF69055">
    <property type="entry name" value="1-deoxy-D-xylulose-5-phosphate reductoisomerase, C-terminal domain"/>
    <property type="match status" value="1"/>
</dbReference>
<dbReference type="SUPFAM" id="SSF55347">
    <property type="entry name" value="Glyceraldehyde-3-phosphate dehydrogenase-like, C-terminal domain"/>
    <property type="match status" value="1"/>
</dbReference>
<dbReference type="SUPFAM" id="SSF51735">
    <property type="entry name" value="NAD(P)-binding Rossmann-fold domains"/>
    <property type="match status" value="1"/>
</dbReference>
<feature type="chain" id="PRO_1000098474" description="1-deoxy-D-xylulose 5-phosphate reductoisomerase">
    <location>
        <begin position="1"/>
        <end position="399"/>
    </location>
</feature>
<feature type="binding site" evidence="1">
    <location>
        <position position="13"/>
    </location>
    <ligand>
        <name>NADPH</name>
        <dbReference type="ChEBI" id="CHEBI:57783"/>
    </ligand>
</feature>
<feature type="binding site" evidence="1">
    <location>
        <position position="14"/>
    </location>
    <ligand>
        <name>NADPH</name>
        <dbReference type="ChEBI" id="CHEBI:57783"/>
    </ligand>
</feature>
<feature type="binding site" evidence="1">
    <location>
        <position position="15"/>
    </location>
    <ligand>
        <name>NADPH</name>
        <dbReference type="ChEBI" id="CHEBI:57783"/>
    </ligand>
</feature>
<feature type="binding site" evidence="1">
    <location>
        <position position="16"/>
    </location>
    <ligand>
        <name>NADPH</name>
        <dbReference type="ChEBI" id="CHEBI:57783"/>
    </ligand>
</feature>
<feature type="binding site" evidence="1">
    <location>
        <position position="127"/>
    </location>
    <ligand>
        <name>NADPH</name>
        <dbReference type="ChEBI" id="CHEBI:57783"/>
    </ligand>
</feature>
<feature type="binding site" evidence="1">
    <location>
        <position position="128"/>
    </location>
    <ligand>
        <name>1-deoxy-D-xylulose 5-phosphate</name>
        <dbReference type="ChEBI" id="CHEBI:57792"/>
    </ligand>
</feature>
<feature type="binding site" evidence="1">
    <location>
        <position position="129"/>
    </location>
    <ligand>
        <name>NADPH</name>
        <dbReference type="ChEBI" id="CHEBI:57783"/>
    </ligand>
</feature>
<feature type="binding site" evidence="1">
    <location>
        <position position="153"/>
    </location>
    <ligand>
        <name>Mn(2+)</name>
        <dbReference type="ChEBI" id="CHEBI:29035"/>
    </ligand>
</feature>
<feature type="binding site" evidence="1">
    <location>
        <position position="154"/>
    </location>
    <ligand>
        <name>1-deoxy-D-xylulose 5-phosphate</name>
        <dbReference type="ChEBI" id="CHEBI:57792"/>
    </ligand>
</feature>
<feature type="binding site" evidence="1">
    <location>
        <position position="155"/>
    </location>
    <ligand>
        <name>1-deoxy-D-xylulose 5-phosphate</name>
        <dbReference type="ChEBI" id="CHEBI:57792"/>
    </ligand>
</feature>
<feature type="binding site" evidence="1">
    <location>
        <position position="155"/>
    </location>
    <ligand>
        <name>Mn(2+)</name>
        <dbReference type="ChEBI" id="CHEBI:29035"/>
    </ligand>
</feature>
<feature type="binding site" evidence="1">
    <location>
        <position position="187"/>
    </location>
    <ligand>
        <name>1-deoxy-D-xylulose 5-phosphate</name>
        <dbReference type="ChEBI" id="CHEBI:57792"/>
    </ligand>
</feature>
<feature type="binding site" evidence="1">
    <location>
        <position position="210"/>
    </location>
    <ligand>
        <name>1-deoxy-D-xylulose 5-phosphate</name>
        <dbReference type="ChEBI" id="CHEBI:57792"/>
    </ligand>
</feature>
<feature type="binding site" evidence="1">
    <location>
        <position position="216"/>
    </location>
    <ligand>
        <name>NADPH</name>
        <dbReference type="ChEBI" id="CHEBI:57783"/>
    </ligand>
</feature>
<feature type="binding site" evidence="1">
    <location>
        <position position="223"/>
    </location>
    <ligand>
        <name>1-deoxy-D-xylulose 5-phosphate</name>
        <dbReference type="ChEBI" id="CHEBI:57792"/>
    </ligand>
</feature>
<feature type="binding site" evidence="1">
    <location>
        <position position="228"/>
    </location>
    <ligand>
        <name>1-deoxy-D-xylulose 5-phosphate</name>
        <dbReference type="ChEBI" id="CHEBI:57792"/>
    </ligand>
</feature>
<feature type="binding site" evidence="1">
    <location>
        <position position="229"/>
    </location>
    <ligand>
        <name>1-deoxy-D-xylulose 5-phosphate</name>
        <dbReference type="ChEBI" id="CHEBI:57792"/>
    </ligand>
</feature>
<feature type="binding site" evidence="1">
    <location>
        <position position="232"/>
    </location>
    <ligand>
        <name>1-deoxy-D-xylulose 5-phosphate</name>
        <dbReference type="ChEBI" id="CHEBI:57792"/>
    </ligand>
</feature>
<feature type="binding site" evidence="1">
    <location>
        <position position="232"/>
    </location>
    <ligand>
        <name>Mn(2+)</name>
        <dbReference type="ChEBI" id="CHEBI:29035"/>
    </ligand>
</feature>
<evidence type="ECO:0000255" key="1">
    <source>
        <dbReference type="HAMAP-Rule" id="MF_00183"/>
    </source>
</evidence>
<reference key="1">
    <citation type="journal article" date="2008" name="BMC Genomics">
        <title>The missing link: Bordetella petrii is endowed with both the metabolic versatility of environmental bacteria and virulence traits of pathogenic Bordetellae.</title>
        <authorList>
            <person name="Gross R."/>
            <person name="Guzman C.A."/>
            <person name="Sebaihia M."/>
            <person name="Martin dos Santos V.A.P."/>
            <person name="Pieper D.H."/>
            <person name="Koebnik R."/>
            <person name="Lechner M."/>
            <person name="Bartels D."/>
            <person name="Buhrmester J."/>
            <person name="Choudhuri J.V."/>
            <person name="Ebensen T."/>
            <person name="Gaigalat L."/>
            <person name="Herrmann S."/>
            <person name="Khachane A.N."/>
            <person name="Larisch C."/>
            <person name="Link S."/>
            <person name="Linke B."/>
            <person name="Meyer F."/>
            <person name="Mormann S."/>
            <person name="Nakunst D."/>
            <person name="Rueckert C."/>
            <person name="Schneiker-Bekel S."/>
            <person name="Schulze K."/>
            <person name="Voerholter F.-J."/>
            <person name="Yevsa T."/>
            <person name="Engle J.T."/>
            <person name="Goldman W.E."/>
            <person name="Puehler A."/>
            <person name="Goebel U.B."/>
            <person name="Goesmann A."/>
            <person name="Bloecker H."/>
            <person name="Kaiser O."/>
            <person name="Martinez-Arias R."/>
        </authorList>
    </citation>
    <scope>NUCLEOTIDE SEQUENCE [LARGE SCALE GENOMIC DNA]</scope>
    <source>
        <strain>ATCC BAA-461 / DSM 12804 / CCUG 43448</strain>
    </source>
</reference>
<protein>
    <recommendedName>
        <fullName evidence="1">1-deoxy-D-xylulose 5-phosphate reductoisomerase</fullName>
        <shortName evidence="1">DXP reductoisomerase</shortName>
        <ecNumber evidence="1">1.1.1.267</ecNumber>
    </recommendedName>
    <alternativeName>
        <fullName evidence="1">1-deoxyxylulose-5-phosphate reductoisomerase</fullName>
    </alternativeName>
    <alternativeName>
        <fullName evidence="1">2-C-methyl-D-erythritol 4-phosphate synthase</fullName>
    </alternativeName>
</protein>
<keyword id="KW-0414">Isoprene biosynthesis</keyword>
<keyword id="KW-0464">Manganese</keyword>
<keyword id="KW-0479">Metal-binding</keyword>
<keyword id="KW-0521">NADP</keyword>
<keyword id="KW-0560">Oxidoreductase</keyword>
<gene>
    <name evidence="1" type="primary">dxr</name>
    <name type="ordered locus">Bpet2529</name>
</gene>
<sequence length="399" mass="42362">MSRFQRVAVLGSTGSIGESTLDVIARHPEQLAVFALSAHSRIERLAEQAAASAAAVVVVPDAAARQRFLAAWPAGRTPPEIRVGAQALADTAADAACDTVMAAIVGAAGLPAALAAAQAGKRVLLANKEALVAAGALFMRAVRANGAELLPIDSEHNAIFQCLPHEGRASAPEQPARGVRRLILTASGGPFRRHDPLDLHEVTPDQACAHPNWSMGRKISVDSATMLNKGLEVIEAHWLFAMPPERIEVLIHPQSVVHSMVEYDDGSVLAQLGQPDMRTPISYGLGFPERLASGVGPLDLARWGRLEFETPDLRRFPCLQLAFDALRAGQAACVALNAANEVAVDAFLSGRLRYTWISRVIAAALEWQQRQSSVTLDSLADVLALDAATRAYAGNLGLA</sequence>
<accession>A9INU2</accession>